<feature type="initiator methionine" description="Removed" evidence="2">
    <location>
        <position position="1"/>
    </location>
</feature>
<feature type="chain" id="PRO_0000073846" description="Calcineurin B homologous protein 1">
    <location>
        <begin position="2"/>
        <end position="195"/>
    </location>
</feature>
<feature type="domain" description="EF-hand 1" evidence="3">
    <location>
        <begin position="26"/>
        <end position="61"/>
    </location>
</feature>
<feature type="domain" description="EF-hand 2" evidence="15">
    <location>
        <begin position="71"/>
        <end position="106"/>
    </location>
</feature>
<feature type="domain" description="EF-hand 3" evidence="3">
    <location>
        <begin position="110"/>
        <end position="145"/>
    </location>
</feature>
<feature type="domain" description="EF-hand 4" evidence="3">
    <location>
        <begin position="151"/>
        <end position="186"/>
    </location>
</feature>
<feature type="short sequence motif" description="Necessary for association with microtubule and interaction with GAPDH">
    <location>
        <begin position="2"/>
        <end position="6"/>
    </location>
</feature>
<feature type="short sequence motif" description="Nuclear export signal 1">
    <location>
        <begin position="138"/>
        <end position="147"/>
    </location>
</feature>
<feature type="short sequence motif" description="Nuclear export signal 2">
    <location>
        <begin position="176"/>
        <end position="185"/>
    </location>
</feature>
<feature type="binding site" evidence="3">
    <location>
        <position position="123"/>
    </location>
    <ligand>
        <name>Ca(2+)</name>
        <dbReference type="ChEBI" id="CHEBI:29108"/>
        <label>1</label>
    </ligand>
</feature>
<feature type="binding site" evidence="3">
    <location>
        <position position="125"/>
    </location>
    <ligand>
        <name>Ca(2+)</name>
        <dbReference type="ChEBI" id="CHEBI:29108"/>
        <label>1</label>
    </ligand>
</feature>
<feature type="binding site" evidence="3">
    <location>
        <position position="127"/>
    </location>
    <ligand>
        <name>Ca(2+)</name>
        <dbReference type="ChEBI" id="CHEBI:29108"/>
        <label>1</label>
    </ligand>
</feature>
<feature type="binding site" evidence="3">
    <location>
        <position position="129"/>
    </location>
    <ligand>
        <name>Ca(2+)</name>
        <dbReference type="ChEBI" id="CHEBI:29108"/>
        <label>1</label>
    </ligand>
</feature>
<feature type="binding site" evidence="3">
    <location>
        <position position="134"/>
    </location>
    <ligand>
        <name>Ca(2+)</name>
        <dbReference type="ChEBI" id="CHEBI:29108"/>
        <label>1</label>
    </ligand>
</feature>
<feature type="binding site" evidence="15">
    <location>
        <position position="164"/>
    </location>
    <ligand>
        <name>Ca(2+)</name>
        <dbReference type="ChEBI" id="CHEBI:29108"/>
        <label>2</label>
    </ligand>
</feature>
<feature type="binding site" evidence="15">
    <location>
        <position position="166"/>
    </location>
    <ligand>
        <name>Ca(2+)</name>
        <dbReference type="ChEBI" id="CHEBI:29108"/>
        <label>2</label>
    </ligand>
</feature>
<feature type="binding site" evidence="15">
    <location>
        <position position="168"/>
    </location>
    <ligand>
        <name>Ca(2+)</name>
        <dbReference type="ChEBI" id="CHEBI:29108"/>
        <label>2</label>
    </ligand>
</feature>
<feature type="binding site" evidence="15">
    <location>
        <position position="175"/>
    </location>
    <ligand>
        <name>Ca(2+)</name>
        <dbReference type="ChEBI" id="CHEBI:29108"/>
        <label>2</label>
    </ligand>
</feature>
<feature type="lipid moiety-binding region" description="N-myristoyl glycine" evidence="2">
    <location>
        <position position="2"/>
    </location>
</feature>
<feature type="mutagenesis site" description="Inhibits calcium-mediated conformational changes. Loss of transcytotic targeting/fusion function. Reduces association with membranes. Does not affect microtubule formation." evidence="8 14">
    <original>E</original>
    <variation>A</variation>
    <location>
        <position position="134"/>
    </location>
</feature>
<feature type="mutagenesis site" description="Predominantly located in the cytoplasm; when associated with A-139. Predominantly located in the nucleus; when associated with A-139; A-179 and A-180." evidence="9">
    <original>V</original>
    <variation>A</variation>
    <location>
        <position position="138"/>
    </location>
</feature>
<feature type="mutagenesis site" description="Predominantly located in the cytoplasm; when associated with A-138. Predominantly located in the nucleus; when associated with A-138; A-179 and A-180." evidence="9">
    <original>L</original>
    <variation>A</variation>
    <location>
        <position position="139"/>
    </location>
</feature>
<feature type="mutagenesis site" description="Predominantly located in the cytoplasm; when associated with A-145 and A-147. Predominantly located in the nucleus; when associated with A-145; A-147; A-183 and A-185." evidence="9 12">
    <original>V</original>
    <variation>A</variation>
    <location>
        <position position="143"/>
    </location>
</feature>
<feature type="mutagenesis site" description="Predominantly located in the cytoplasm; when associated with A-143 and A-147. Predominantly located in the nucleus; when associated with A-143; A-147; A-183 and A-185." evidence="9 12">
    <original>V</original>
    <variation>A</variation>
    <location>
        <position position="145"/>
    </location>
</feature>
<feature type="mutagenesis site" description="Predominantly located in the cytoplasm; when associated with A-143 and A-145. Predominantly located in the nucleus; when associated with A-143; A-145; A-183 and A-185." evidence="9 12">
    <original>I</original>
    <variation>A</variation>
    <location>
        <position position="147"/>
    </location>
</feature>
<feature type="mutagenesis site" description="Predominantly located in the cytoplasm; when associated with A-180. Predominantly located in the nucleus; when associated with A-138; A-139 and A-180." evidence="9">
    <original>V</original>
    <variation>A</variation>
    <location>
        <position position="179"/>
    </location>
</feature>
<feature type="mutagenesis site" description="Predominantly located in the cytoplasm; when associated with A-179. Predominantly located in the nucleus; when associated with A-138; A-139 and A-179." evidence="9">
    <original>L</original>
    <variation>A</variation>
    <location>
        <position position="180"/>
    </location>
</feature>
<feature type="mutagenesis site" description="Predominantly located in the cytoplasm; when associated with A-185. Predominantly located in the nucleus; when associated with A-143; A-145; A-147 and A-185." evidence="9 12">
    <original>V</original>
    <variation>A</variation>
    <location>
        <position position="183"/>
    </location>
</feature>
<feature type="mutagenesis site" description="Predominantly located in the cytoplasm; when associated with A-183. Predominantly located in the nucleus; when associated with A-143; A-145; A-147 and A-183." evidence="9 12">
    <original>V</original>
    <variation>A</variation>
    <location>
        <position position="185"/>
    </location>
</feature>
<feature type="helix" evidence="16">
    <location>
        <begin position="4"/>
        <end position="7"/>
    </location>
</feature>
<feature type="helix" evidence="16">
    <location>
        <begin position="11"/>
        <end position="21"/>
    </location>
</feature>
<feature type="helix" evidence="16">
    <location>
        <begin position="25"/>
        <end position="38"/>
    </location>
</feature>
<feature type="strand" evidence="16">
    <location>
        <begin position="43"/>
        <end position="46"/>
    </location>
</feature>
<feature type="helix" evidence="16">
    <location>
        <begin position="49"/>
        <end position="53"/>
    </location>
</feature>
<feature type="helix" evidence="16">
    <location>
        <begin position="55"/>
        <end position="58"/>
    </location>
</feature>
<feature type="helix" evidence="16">
    <location>
        <begin position="63"/>
        <end position="68"/>
    </location>
</feature>
<feature type="helix" evidence="16">
    <location>
        <begin position="80"/>
        <end position="88"/>
    </location>
</feature>
<feature type="helix" evidence="16">
    <location>
        <begin position="111"/>
        <end position="122"/>
    </location>
</feature>
<feature type="strand" evidence="16">
    <location>
        <begin position="127"/>
        <end position="130"/>
    </location>
</feature>
<feature type="helix" evidence="16">
    <location>
        <begin position="132"/>
        <end position="142"/>
    </location>
</feature>
<feature type="helix" evidence="16">
    <location>
        <begin position="149"/>
        <end position="163"/>
    </location>
</feature>
<feature type="strand" evidence="16">
    <location>
        <begin position="165"/>
        <end position="172"/>
    </location>
</feature>
<feature type="helix" evidence="16">
    <location>
        <begin position="173"/>
        <end position="178"/>
    </location>
</feature>
<feature type="turn" evidence="16">
    <location>
        <begin position="179"/>
        <end position="182"/>
    </location>
</feature>
<feature type="helix" evidence="16">
    <location>
        <begin position="185"/>
        <end position="187"/>
    </location>
</feature>
<feature type="helix" evidence="16">
    <location>
        <begin position="189"/>
        <end position="195"/>
    </location>
</feature>
<gene>
    <name type="primary">Chp1</name>
    <name type="synonym">Chp</name>
</gene>
<comment type="function">
    <text evidence="7 8 10 12 13 14">Calcium-binding protein involved in different processes such as regulation of vesicular trafficking, plasma membrane Na(+)/H(+) exchanger and gene transcription. Involved in the constitutive exocytic membrane traffic. Mediates the association between microtubules and membrane-bound organelles of the endoplasmic reticulum and Golgi apparatus and is also required for the targeting and fusion of transcytotic vesicles (TCV) with the plasma membrane. Functions as an integral cofactor in cell pH regulation by controlling plasma membrane-type Na(+)/H(+) exchange activity. Affects the pH sensitivity of SLC9A1/NHE1 by increasing its sensitivity at acidic pH. Required for the stabilization and localization of SLC9A1/NHE1 at the plasma membrane. Inhibits serum- and GTPase-stimulated Na(+)/H(+) exchange. Plays a role as an inhibitor of ribosomal RNA transcription by repressing the nucleolar UBF1 transcriptional activity. May sequester UBF1 in the nucleoplasm and limit its translocation to the nucleolus. Associates to the ribosomal gene promoter. Acts as a negative regulator of the calcineurin/NFAT signaling pathway. Inhibits NFAT nuclear translocation and transcriptional activity by suppressing the calcium-dependent calcineurin phosphatase activity. Also negatively regulates the kinase activity of the apoptosis-induced kinase STK17B. Inhibits both STK17B auto- and substrate-phosphorylations in a calcium-dependent manner.</text>
</comment>
<comment type="subunit">
    <text evidence="2 5 6 7 10 11">Interacts with PPP3CA. Interacts with SLC9A1/NHE1 (via the juxtamembrane region of the cytoplasmic C-terminal domain); the interaction occurs at the plasma membrane in a calcium-dependent manner and at a domain that is critical for growth factor stimulation of the exchanger (By similarity). Monomer. Interacts with STK17B; the interaction occurs in a calcium-independent manner and induces the translocation of CHP1 from the Golgi to the nucleus. Interacts with GAPDH; the interaction is direct, occurs in a N-myristoylation-dependent manner and facilitates the ability of CHP1 to bind microtubules. Interacts with KIF1B (via the C-terminal end of the kinesin-motor domain); the interaction occurs in a calcium-dependent manner. Associates (via C-terminal domain) with microtubules; the association occurs with polymerized microtubules during the cell cycle in a myristoylation- and calcium-independent manner and is enhanced by GAPDH. Interacts with SLC9A3; increases SLC9A3 trafficking and activity at the plasma membrane (By similarity).</text>
</comment>
<comment type="interaction">
    <interactant intactId="EBI-917838">
        <id>P61023</id>
    </interactant>
    <interactant intactId="EBI-349219">
        <id>P04797</id>
        <label>Gapdh</label>
    </interactant>
    <organismsDiffer>false</organismsDiffer>
    <experiments>3</experiments>
</comment>
<comment type="interaction">
    <interactant intactId="EBI-917838">
        <id>P61023</id>
    </interactant>
    <interactant intactId="EBI-6143515">
        <id>O88658-1</id>
        <label>Kif1b</label>
    </interactant>
    <organismsDiffer>false</organismsDiffer>
    <experiments>4</experiments>
</comment>
<comment type="interaction">
    <interactant intactId="EBI-917838">
        <id>P61023</id>
    </interactant>
    <interactant intactId="EBI-77460">
        <id>Q91XS8</id>
        <label>Stk17b</label>
    </interactant>
    <organismsDiffer>false</organismsDiffer>
    <experiments>6</experiments>
</comment>
<comment type="interaction">
    <interactant intactId="EBI-917838">
        <id>P61023</id>
    </interactant>
    <interactant intactId="EBI-2750726">
        <id>P46406</id>
        <label>GAPDH</label>
    </interactant>
    <organismsDiffer>true</organismsDiffer>
    <experiments>2</experiments>
</comment>
<comment type="subcellular location">
    <subcellularLocation>
        <location evidence="12">Nucleus</location>
    </subcellularLocation>
    <subcellularLocation>
        <location evidence="6 9">Cytoplasm</location>
    </subcellularLocation>
    <subcellularLocation>
        <location evidence="4 10">Cytoplasm</location>
        <location evidence="4 10">Cytoskeleton</location>
    </subcellularLocation>
    <subcellularLocation>
        <location evidence="10">Endomembrane system</location>
    </subcellularLocation>
    <subcellularLocation>
        <location evidence="15">Endoplasmic reticulum-Golgi intermediate compartment</location>
    </subcellularLocation>
    <subcellularLocation>
        <location evidence="8">Endoplasmic reticulum</location>
    </subcellularLocation>
    <subcellularLocation>
        <location evidence="13">Cell membrane</location>
    </subcellularLocation>
    <subcellularLocation>
        <location evidence="2">Membrane</location>
        <topology evidence="2">Lipid-anchor</topology>
    </subcellularLocation>
    <text evidence="8 10 12 13">Localizes in cytoplasmic compartments in dividing cells. Localizes in the nucleus in quiescent cells. Exported from the nucleus to the cytoplasm through a nuclear export signal (NES) and CRM1-dependent pathway. May shuttle between nucleus and cytoplasm. Localizes with the microtubule-organizing center (MTOC) and extends toward the periphery along microtubules. Associates with membranes of the early secretory pathway in a GAPDH-independent, N-myristoylation- and calcium-dependent manner. Colocalizes with the mitotic spindle microtubules. Colocalizes with GAPDH along microtubules. Colocalizes with SLC9A1 at the reticulum endoplasmic and plasma membrane. Colocalizes with STK17B at the plasma membrane.</text>
</comment>
<comment type="tissue specificity">
    <text evidence="4 10 14">Expressed in liver and kidney (at protein level). Ubiquitously expressed. Expressed in the brain, lung, testes, kidney, spleen and heart.</text>
</comment>
<comment type="PTM">
    <text evidence="1">Phosphorylated; decreased phosphorylation is associated with an increase in SLC9A1/NHE1 Na(+)/H(+) exchange activity. Phosphorylation occurs in serum-dependent manner. The phosphorylation state may regulate the binding to SLC9A1/NHE1 (By similarity).</text>
</comment>
<comment type="PTM">
    <text>N-myristoylation is required for its association with microtubules and interaction with GAPDH, but not for the constitutive association to membranes. Both N-myristoylation and calcium-mediated conformational changes are essential in exocytic traffic.</text>
</comment>
<comment type="similarity">
    <text evidence="15">Belongs to the calcineurin regulatory subunit family. CHP subfamily.</text>
</comment>
<reference key="1">
    <citation type="journal article" date="1996" name="J. Biol. Chem.">
        <title>A novel Ca2+-binding protein, p22, is required for constitutive membrane traffic.</title>
        <authorList>
            <person name="Barroso M.R."/>
            <person name="Bernd K.K."/>
            <person name="Dewitt N.D."/>
            <person name="Chang A."/>
            <person name="Mills K."/>
            <person name="Sztul E.S."/>
        </authorList>
    </citation>
    <scope>NUCLEOTIDE SEQUENCE [MRNA]</scope>
    <scope>FUNCTION IN EXOCYTIC MEMBRANE TRAFFIC</scope>
    <scope>CALCIUM-BINDING</scope>
    <scope>MUTAGENESIS OF GLU-134</scope>
    <scope>TISSUE SPECIFICITY</scope>
    <source>
        <tissue>Liver</tissue>
    </source>
</reference>
<reference key="2">
    <citation type="journal article" date="2001" name="J. Biochem.">
        <title>A serine/threonine kinase which causes apoptosis-like cell death interacts with a calcineurin B-like protein capable of binding Na+/H+ exchanger.</title>
        <authorList>
            <person name="Matsumoto M."/>
            <person name="Miyake Y."/>
            <person name="Nagita M."/>
            <person name="Inoue H."/>
            <person name="Shitakubo D."/>
            <person name="Takemoto K."/>
            <person name="Ohtsuka C."/>
            <person name="Murakami H."/>
            <person name="Nakamura N."/>
            <person name="Kanazawa H."/>
        </authorList>
    </citation>
    <scope>NUCLEOTIDE SEQUENCE [MRNA]</scope>
    <scope>INTERACTION WITH STK17B</scope>
    <source>
        <tissue>Brain</tissue>
    </source>
</reference>
<reference key="3">
    <citation type="journal article" date="2004" name="Genome Res.">
        <title>The status, quality, and expansion of the NIH full-length cDNA project: the Mammalian Gene Collection (MGC).</title>
        <authorList>
            <consortium name="The MGC Project Team"/>
        </authorList>
    </citation>
    <scope>NUCLEOTIDE SEQUENCE [LARGE SCALE MRNA]</scope>
    <source>
        <tissue>Prostate</tissue>
    </source>
</reference>
<reference key="4">
    <citation type="journal article" date="1999" name="Mol. Biol. Cell">
        <title>The EF-hand Ca(2+)-binding protein p22 associates with microtubules in an N-myristoylation-dependent manner.</title>
        <authorList>
            <person name="Timm S."/>
            <person name="Titus B."/>
            <person name="Bernd K."/>
            <person name="Barroso M."/>
        </authorList>
    </citation>
    <scope>ASSOCIATION WITH MICROTUBULES</scope>
    <scope>SUBCELLULAR LOCATION</scope>
    <scope>TISSUE SPECIFICITY</scope>
</reference>
<reference key="5">
    <citation type="journal article" date="2002" name="J. Biochem.">
        <title>KIF1Bbeta2, capable of interacting with CHP, is localized to synaptic vesicles.</title>
        <authorList>
            <person name="Nakamura N."/>
            <person name="Miyake Y."/>
            <person name="Matsushita M."/>
            <person name="Tanaka S."/>
            <person name="Inoue H."/>
            <person name="Kanazawa H."/>
        </authorList>
    </citation>
    <scope>INTERACTION WITH KIF1B</scope>
    <scope>SUBCELLULAR LOCATION</scope>
</reference>
<reference key="6">
    <citation type="journal article" date="2003" name="J. Biochem.">
        <title>The apoptosis-inducing protein kinase DRAK2 is inhibited in a calcium-dependent manner by the calcium-binding protein CHP.</title>
        <authorList>
            <person name="Kuwahara H."/>
            <person name="Kamei J."/>
            <person name="Nakamura N."/>
            <person name="Matsumoto M."/>
            <person name="Inoue H."/>
            <person name="Kanazawa H."/>
        </authorList>
    </citation>
    <scope>FUNCTION AS STK17B KINASE INHIBITOR</scope>
    <scope>INTERACTION WITH STK17B</scope>
</reference>
<reference key="7">
    <citation type="journal article" date="2003" name="J. Biochem.">
        <title>Two nuclear export signals specify the cytoplasmic localization of calcineurin B homologous protein 1.</title>
        <authorList>
            <person name="Nagita M."/>
            <person name="Inoue H."/>
            <person name="Nakamura N."/>
            <person name="Kanazawa H."/>
        </authorList>
    </citation>
    <scope>SUBCELLULAR LOCATION</scope>
    <scope>NUCLEAR EXPORT SIGNALS</scope>
    <scope>MUTAGENESIS OF VAL-138; LEU-139; VAL-143; VAL-145; ILE-147; VAL-179; LEU-180; VAL-183 AND VAL-185</scope>
</reference>
<reference key="8">
    <citation type="journal article" date="2004" name="Biochem. J.">
        <title>Interactions among p22, glyceraldehyde-3-phosphate dehydrogenase and microtubules.</title>
        <authorList>
            <person name="Andrade J."/>
            <person name="Pearce S.T."/>
            <person name="Zhao H."/>
            <person name="Barroso M."/>
        </authorList>
    </citation>
    <scope>FUNCTION</scope>
    <scope>INTERACTION WITH GAPDH</scope>
    <scope>ASSOCIATION WITH MICROTUBULES</scope>
    <scope>SUBCELLULAR LOCATION</scope>
    <scope>TISSUE SPECIFICITY</scope>
</reference>
<reference key="9">
    <citation type="journal article" date="2004" name="Mol. Biol. Cell">
        <title>The EF-hand Ca2+-binding protein p22 plays a role in microtubule and endoplasmic reticulum organization and dynamics with distinct Ca2+-binding requirements.</title>
        <authorList>
            <person name="Andrade J."/>
            <person name="Zhao H."/>
            <person name="Titus B."/>
            <person name="Timm Pearce S."/>
            <person name="Barroso M."/>
        </authorList>
    </citation>
    <scope>FUNCTION</scope>
    <scope>SUBCELLULAR LOCATION</scope>
    <scope>MUTAGENESIS OF GLU-134</scope>
</reference>
<reference key="10">
    <citation type="journal article" date="2010" name="J. Biol. Chem.">
        <title>Nuclear-localized calcineurin homologous protein CHP1 interacts with upstream binding factor and inhibits ribosomal RNA synthesis.</title>
        <authorList>
            <person name="Jimenez-Vidal M."/>
            <person name="Srivastava J."/>
            <person name="Putney L.K."/>
            <person name="Barber D.L."/>
        </authorList>
    </citation>
    <scope>FUNCTION IN TRANSCRIPTION REGULATION</scope>
    <scope>SUBCELLULAR LOCATION</scope>
    <scope>MUTAGENESIS OF VAL-143; VAL-145; ILE-147; VAL-183 AND VAL-185</scope>
</reference>
<reference key="11">
    <citation type="journal article" date="2011" name="Am. J. Physiol.">
        <title>Dual functional significance of calcineurin homologous protein 1 binding to Na(+)/H(+) exchanger isoform 1.</title>
        <authorList>
            <person name="Matsushita M."/>
            <person name="Tanaka H."/>
            <person name="Mitsui K."/>
            <person name="Kanazawa H."/>
        </authorList>
    </citation>
    <scope>FUNCTION</scope>
    <scope>SUBCELLULAR LOCATION</scope>
</reference>
<reference key="12">
    <citation type="journal article" date="2005" name="Acta Crystallogr. F">
        <title>Crystallization and preliminary X-ray crystallographic analysis of rat calcineurin B homologous protein 1.</title>
        <authorList>
            <person name="Naoe Y."/>
            <person name="Arita K."/>
            <person name="Hashimoto H."/>
            <person name="Kanazawa H."/>
            <person name="Sato M."/>
            <person name="Shimizu T."/>
        </authorList>
    </citation>
    <scope>PRELIMINARY X-RAY CRYSTALLOGRAPHY</scope>
</reference>
<reference key="13">
    <citation type="journal article" date="2005" name="J. Biol. Chem.">
        <title>Structural characterization of calcineurin B homologous protein 1.</title>
        <authorList>
            <person name="Naoe Y."/>
            <person name="Arita K."/>
            <person name="Hashimoto H."/>
            <person name="Kanazawa H."/>
            <person name="Sato M."/>
            <person name="Shimizu T."/>
        </authorList>
    </citation>
    <scope>X-RAY CRYSTALLOGRAPHY (2.2 ANGSTROMS) IN COMPLEX WITH CALCIUM IONS</scope>
    <scope>SUBUNIT</scope>
</reference>
<accession>P61023</accession>
<accession>Q62877</accession>
<sequence>MGSRASTLLRDEELEEIKKETGFSHSQITRLYSRFTSLDKGENGTLSREDFQRIPELAINPLGDRIINAFFSEGEDQVNFRGFMRTLAHFRPIEDNEKSKDVNGPEPLNSRSNKLHFAFRLYDLDKDDKISRDELLQVLRMMVGVNISDEQLGSIADRTIQEADQDGDSAISFTEFVKVLEKVDVEQKMSIRFLH</sequence>
<evidence type="ECO:0000250" key="1"/>
<evidence type="ECO:0000250" key="2">
    <source>
        <dbReference type="UniProtKB" id="Q99653"/>
    </source>
</evidence>
<evidence type="ECO:0000255" key="3">
    <source>
        <dbReference type="PROSITE-ProRule" id="PRU00448"/>
    </source>
</evidence>
<evidence type="ECO:0000269" key="4">
    <source>
    </source>
</evidence>
<evidence type="ECO:0000269" key="5">
    <source>
    </source>
</evidence>
<evidence type="ECO:0000269" key="6">
    <source>
    </source>
</evidence>
<evidence type="ECO:0000269" key="7">
    <source>
    </source>
</evidence>
<evidence type="ECO:0000269" key="8">
    <source>
    </source>
</evidence>
<evidence type="ECO:0000269" key="9">
    <source>
    </source>
</evidence>
<evidence type="ECO:0000269" key="10">
    <source>
    </source>
</evidence>
<evidence type="ECO:0000269" key="11">
    <source>
    </source>
</evidence>
<evidence type="ECO:0000269" key="12">
    <source>
    </source>
</evidence>
<evidence type="ECO:0000269" key="13">
    <source>
    </source>
</evidence>
<evidence type="ECO:0000269" key="14">
    <source>
    </source>
</evidence>
<evidence type="ECO:0000305" key="15"/>
<evidence type="ECO:0007829" key="16">
    <source>
        <dbReference type="PDB" id="2CT9"/>
    </source>
</evidence>
<organism>
    <name type="scientific">Rattus norvegicus</name>
    <name type="common">Rat</name>
    <dbReference type="NCBI Taxonomy" id="10116"/>
    <lineage>
        <taxon>Eukaryota</taxon>
        <taxon>Metazoa</taxon>
        <taxon>Chordata</taxon>
        <taxon>Craniata</taxon>
        <taxon>Vertebrata</taxon>
        <taxon>Euteleostomi</taxon>
        <taxon>Mammalia</taxon>
        <taxon>Eutheria</taxon>
        <taxon>Euarchontoglires</taxon>
        <taxon>Glires</taxon>
        <taxon>Rodentia</taxon>
        <taxon>Myomorpha</taxon>
        <taxon>Muroidea</taxon>
        <taxon>Muridae</taxon>
        <taxon>Murinae</taxon>
        <taxon>Rattus</taxon>
    </lineage>
</organism>
<protein>
    <recommendedName>
        <fullName>Calcineurin B homologous protein 1</fullName>
    </recommendedName>
    <alternativeName>
        <fullName>Calcineurin B-like protein</fullName>
    </alternativeName>
    <alternativeName>
        <fullName>Calcium-binding protein CHP</fullName>
    </alternativeName>
    <alternativeName>
        <fullName>Calcium-binding protein p22</fullName>
    </alternativeName>
    <alternativeName>
        <fullName>EF-hand calcium-binding domain-containing protein p22</fullName>
    </alternativeName>
</protein>
<keyword id="KW-0002">3D-structure</keyword>
<keyword id="KW-0106">Calcium</keyword>
<keyword id="KW-1003">Cell membrane</keyword>
<keyword id="KW-0963">Cytoplasm</keyword>
<keyword id="KW-0206">Cytoskeleton</keyword>
<keyword id="KW-0256">Endoplasmic reticulum</keyword>
<keyword id="KW-0449">Lipoprotein</keyword>
<keyword id="KW-0472">Membrane</keyword>
<keyword id="KW-0479">Metal-binding</keyword>
<keyword id="KW-0519">Myristate</keyword>
<keyword id="KW-0539">Nucleus</keyword>
<keyword id="KW-0597">Phosphoprotein</keyword>
<keyword id="KW-0649">Protein kinase inhibitor</keyword>
<keyword id="KW-0653">Protein transport</keyword>
<keyword id="KW-1185">Reference proteome</keyword>
<keyword id="KW-0677">Repeat</keyword>
<keyword id="KW-0813">Transport</keyword>
<dbReference type="EMBL" id="U39875">
    <property type="protein sequence ID" value="AAB04146.1"/>
    <property type="molecule type" value="mRNA"/>
</dbReference>
<dbReference type="EMBL" id="AB070350">
    <property type="protein sequence ID" value="BAB63369.1"/>
    <property type="molecule type" value="mRNA"/>
</dbReference>
<dbReference type="EMBL" id="BC062029">
    <property type="protein sequence ID" value="AAH62029.1"/>
    <property type="molecule type" value="mRNA"/>
</dbReference>
<dbReference type="RefSeq" id="NP_077053.1">
    <property type="nucleotide sequence ID" value="NM_024139.2"/>
</dbReference>
<dbReference type="PDB" id="2CT9">
    <property type="method" value="X-ray"/>
    <property type="resolution" value="2.20 A"/>
    <property type="chains" value="A/B=1-195"/>
</dbReference>
<dbReference type="PDBsum" id="2CT9"/>
<dbReference type="SMR" id="P61023"/>
<dbReference type="FunCoup" id="P61023">
    <property type="interactions" value="2369"/>
</dbReference>
<dbReference type="IntAct" id="P61023">
    <property type="interactions" value="12"/>
</dbReference>
<dbReference type="MINT" id="P61023"/>
<dbReference type="STRING" id="10116.ENSRNOP00000053243"/>
<dbReference type="PhosphoSitePlus" id="P61023"/>
<dbReference type="jPOST" id="P61023"/>
<dbReference type="PaxDb" id="10116-ENSRNOP00000053243"/>
<dbReference type="Ensembl" id="ENSRNOT00000056405.3">
    <property type="protein sequence ID" value="ENSRNOP00000053243.2"/>
    <property type="gene ID" value="ENSRNOG00000004742.6"/>
</dbReference>
<dbReference type="GeneID" id="64152"/>
<dbReference type="KEGG" id="rno:64152"/>
<dbReference type="UCSC" id="RGD:620447">
    <property type="organism name" value="rat"/>
</dbReference>
<dbReference type="AGR" id="RGD:620447"/>
<dbReference type="CTD" id="11261"/>
<dbReference type="RGD" id="620447">
    <property type="gene designation" value="Chp1"/>
</dbReference>
<dbReference type="eggNOG" id="KOG0034">
    <property type="taxonomic scope" value="Eukaryota"/>
</dbReference>
<dbReference type="GeneTree" id="ENSGT00940000154629"/>
<dbReference type="HOGENOM" id="CLU_061288_10_5_1"/>
<dbReference type="InParanoid" id="P61023"/>
<dbReference type="OMA" id="LKFAFRM"/>
<dbReference type="OrthoDB" id="191686at2759"/>
<dbReference type="PhylomeDB" id="P61023"/>
<dbReference type="TreeFam" id="TF354284"/>
<dbReference type="Reactome" id="R-RNO-2160916">
    <property type="pathway name" value="Hyaluronan uptake and degradation"/>
</dbReference>
<dbReference type="EvolutionaryTrace" id="P61023"/>
<dbReference type="PRO" id="PR:P61023"/>
<dbReference type="Proteomes" id="UP000002494">
    <property type="component" value="Chromosome 3"/>
</dbReference>
<dbReference type="Bgee" id="ENSRNOG00000004742">
    <property type="expression patterns" value="Expressed in stomach and 19 other cell types or tissues"/>
</dbReference>
<dbReference type="GO" id="GO:0005737">
    <property type="term" value="C:cytoplasm"/>
    <property type="evidence" value="ECO:0000314"/>
    <property type="project" value="UniProtKB"/>
</dbReference>
<dbReference type="GO" id="GO:0005783">
    <property type="term" value="C:endoplasmic reticulum"/>
    <property type="evidence" value="ECO:0000314"/>
    <property type="project" value="UniProtKB"/>
</dbReference>
<dbReference type="GO" id="GO:0005793">
    <property type="term" value="C:endoplasmic reticulum-Golgi intermediate compartment"/>
    <property type="evidence" value="ECO:0007669"/>
    <property type="project" value="UniProtKB-SubCell"/>
</dbReference>
<dbReference type="GO" id="GO:0000139">
    <property type="term" value="C:Golgi membrane"/>
    <property type="evidence" value="ECO:0000314"/>
    <property type="project" value="UniProtKB"/>
</dbReference>
<dbReference type="GO" id="GO:0045121">
    <property type="term" value="C:membrane raft"/>
    <property type="evidence" value="ECO:0000266"/>
    <property type="project" value="RGD"/>
</dbReference>
<dbReference type="GO" id="GO:0015630">
    <property type="term" value="C:microtubule cytoskeleton"/>
    <property type="evidence" value="ECO:0000314"/>
    <property type="project" value="UniProtKB"/>
</dbReference>
<dbReference type="GO" id="GO:0005634">
    <property type="term" value="C:nucleus"/>
    <property type="evidence" value="ECO:0000314"/>
    <property type="project" value="UniProtKB"/>
</dbReference>
<dbReference type="GO" id="GO:0005886">
    <property type="term" value="C:plasma membrane"/>
    <property type="evidence" value="ECO:0000314"/>
    <property type="project" value="UniProtKB"/>
</dbReference>
<dbReference type="GO" id="GO:0030133">
    <property type="term" value="C:transport vesicle"/>
    <property type="evidence" value="ECO:0000314"/>
    <property type="project" value="UniProtKB"/>
</dbReference>
<dbReference type="GO" id="GO:1990351">
    <property type="term" value="C:transporter complex"/>
    <property type="evidence" value="ECO:0000266"/>
    <property type="project" value="RGD"/>
</dbReference>
<dbReference type="GO" id="GO:0005509">
    <property type="term" value="F:calcium ion binding"/>
    <property type="evidence" value="ECO:0000314"/>
    <property type="project" value="RGD"/>
</dbReference>
<dbReference type="GO" id="GO:0048306">
    <property type="term" value="F:calcium-dependent protein binding"/>
    <property type="evidence" value="ECO:0000250"/>
    <property type="project" value="UniProtKB"/>
</dbReference>
<dbReference type="GO" id="GO:0019900">
    <property type="term" value="F:kinase binding"/>
    <property type="evidence" value="ECO:0000314"/>
    <property type="project" value="UniProtKB"/>
</dbReference>
<dbReference type="GO" id="GO:0008017">
    <property type="term" value="F:microtubule binding"/>
    <property type="evidence" value="ECO:0000314"/>
    <property type="project" value="UniProtKB"/>
</dbReference>
<dbReference type="GO" id="GO:0004860">
    <property type="term" value="F:protein kinase inhibitor activity"/>
    <property type="evidence" value="ECO:0007669"/>
    <property type="project" value="UniProtKB-KW"/>
</dbReference>
<dbReference type="GO" id="GO:0015385">
    <property type="term" value="F:sodium:proton antiporter activity"/>
    <property type="evidence" value="ECO:0000266"/>
    <property type="project" value="RGD"/>
</dbReference>
<dbReference type="GO" id="GO:0071468">
    <property type="term" value="P:cellular response to acidic pH"/>
    <property type="evidence" value="ECO:0000250"/>
    <property type="project" value="UniProtKB"/>
</dbReference>
<dbReference type="GO" id="GO:0031122">
    <property type="term" value="P:cytoplasmic microtubule organization"/>
    <property type="evidence" value="ECO:0000314"/>
    <property type="project" value="UniProtKB"/>
</dbReference>
<dbReference type="GO" id="GO:0022406">
    <property type="term" value="P:membrane docking"/>
    <property type="evidence" value="ECO:0000314"/>
    <property type="project" value="UniProtKB"/>
</dbReference>
<dbReference type="GO" id="GO:0061025">
    <property type="term" value="P:membrane fusion"/>
    <property type="evidence" value="ECO:0000314"/>
    <property type="project" value="UniProtKB"/>
</dbReference>
<dbReference type="GO" id="GO:0061024">
    <property type="term" value="P:membrane organization"/>
    <property type="evidence" value="ECO:0000314"/>
    <property type="project" value="UniProtKB"/>
</dbReference>
<dbReference type="GO" id="GO:0001578">
    <property type="term" value="P:microtubule bundle formation"/>
    <property type="evidence" value="ECO:0000314"/>
    <property type="project" value="UniProtKB"/>
</dbReference>
<dbReference type="GO" id="GO:0070885">
    <property type="term" value="P:negative regulation of calcineurin-NFAT signaling cascade"/>
    <property type="evidence" value="ECO:0000250"/>
    <property type="project" value="UniProtKB"/>
</dbReference>
<dbReference type="GO" id="GO:0032088">
    <property type="term" value="P:negative regulation of NF-kappaB transcription factor activity"/>
    <property type="evidence" value="ECO:0000250"/>
    <property type="project" value="UniProtKB"/>
</dbReference>
<dbReference type="GO" id="GO:0010923">
    <property type="term" value="P:negative regulation of phosphatase activity"/>
    <property type="evidence" value="ECO:0000250"/>
    <property type="project" value="UniProtKB"/>
</dbReference>
<dbReference type="GO" id="GO:0031953">
    <property type="term" value="P:negative regulation of protein autophosphorylation"/>
    <property type="evidence" value="ECO:0000314"/>
    <property type="project" value="UniProtKB"/>
</dbReference>
<dbReference type="GO" id="GO:0042308">
    <property type="term" value="P:negative regulation of protein import into nucleus"/>
    <property type="evidence" value="ECO:0000250"/>
    <property type="project" value="UniProtKB"/>
</dbReference>
<dbReference type="GO" id="GO:0006469">
    <property type="term" value="P:negative regulation of protein kinase activity"/>
    <property type="evidence" value="ECO:0000314"/>
    <property type="project" value="UniProtKB"/>
</dbReference>
<dbReference type="GO" id="GO:0001933">
    <property type="term" value="P:negative regulation of protein phosphorylation"/>
    <property type="evidence" value="ECO:0000314"/>
    <property type="project" value="UniProtKB"/>
</dbReference>
<dbReference type="GO" id="GO:0031397">
    <property type="term" value="P:negative regulation of protein ubiquitination"/>
    <property type="evidence" value="ECO:0000314"/>
    <property type="project" value="UniProtKB"/>
</dbReference>
<dbReference type="GO" id="GO:0071073">
    <property type="term" value="P:positive regulation of phospholipid biosynthetic process"/>
    <property type="evidence" value="ECO:0000266"/>
    <property type="project" value="RGD"/>
</dbReference>
<dbReference type="GO" id="GO:0060050">
    <property type="term" value="P:positive regulation of protein glycosylation"/>
    <property type="evidence" value="ECO:0000314"/>
    <property type="project" value="UniProtKB"/>
</dbReference>
<dbReference type="GO" id="GO:0090314">
    <property type="term" value="P:positive regulation of protein targeting to membrane"/>
    <property type="evidence" value="ECO:0000250"/>
    <property type="project" value="UniProtKB"/>
</dbReference>
<dbReference type="GO" id="GO:0051222">
    <property type="term" value="P:positive regulation of protein transport"/>
    <property type="evidence" value="ECO:0000314"/>
    <property type="project" value="UniProtKB"/>
</dbReference>
<dbReference type="GO" id="GO:0032417">
    <property type="term" value="P:positive regulation of sodium:proton antiporter activity"/>
    <property type="evidence" value="ECO:0000250"/>
    <property type="project" value="UniProtKB"/>
</dbReference>
<dbReference type="GO" id="GO:0051259">
    <property type="term" value="P:protein complex oligomerization"/>
    <property type="evidence" value="ECO:0000314"/>
    <property type="project" value="UniProtKB"/>
</dbReference>
<dbReference type="GO" id="GO:0006611">
    <property type="term" value="P:protein export from nucleus"/>
    <property type="evidence" value="ECO:0000314"/>
    <property type="project" value="UniProtKB"/>
</dbReference>
<dbReference type="GO" id="GO:0050821">
    <property type="term" value="P:protein stabilization"/>
    <property type="evidence" value="ECO:0000314"/>
    <property type="project" value="UniProtKB"/>
</dbReference>
<dbReference type="GO" id="GO:0051453">
    <property type="term" value="P:regulation of intracellular pH"/>
    <property type="evidence" value="ECO:0000250"/>
    <property type="project" value="UniProtKB"/>
</dbReference>
<dbReference type="GO" id="GO:0006906">
    <property type="term" value="P:vesicle fusion"/>
    <property type="evidence" value="ECO:0000314"/>
    <property type="project" value="RGD"/>
</dbReference>
<dbReference type="GO" id="GO:0006903">
    <property type="term" value="P:vesicle targeting"/>
    <property type="evidence" value="ECO:0000314"/>
    <property type="project" value="RGD"/>
</dbReference>
<dbReference type="CDD" id="cd00051">
    <property type="entry name" value="EFh"/>
    <property type="match status" value="1"/>
</dbReference>
<dbReference type="FunFam" id="1.10.238.10:FF:000093">
    <property type="entry name" value="Calcineurin B homologous protein 1"/>
    <property type="match status" value="1"/>
</dbReference>
<dbReference type="Gene3D" id="1.10.238.10">
    <property type="entry name" value="EF-hand"/>
    <property type="match status" value="1"/>
</dbReference>
<dbReference type="InterPro" id="IPR051875">
    <property type="entry name" value="Calcineurin_B_homologous"/>
</dbReference>
<dbReference type="InterPro" id="IPR011992">
    <property type="entry name" value="EF-hand-dom_pair"/>
</dbReference>
<dbReference type="InterPro" id="IPR018247">
    <property type="entry name" value="EF_Hand_1_Ca_BS"/>
</dbReference>
<dbReference type="InterPro" id="IPR002048">
    <property type="entry name" value="EF_hand_dom"/>
</dbReference>
<dbReference type="PANTHER" id="PTHR46002">
    <property type="entry name" value="EG:114D9.1 PROTEIN-RELATED"/>
    <property type="match status" value="1"/>
</dbReference>
<dbReference type="Pfam" id="PF13499">
    <property type="entry name" value="EF-hand_7"/>
    <property type="match status" value="1"/>
</dbReference>
<dbReference type="SMART" id="SM00054">
    <property type="entry name" value="EFh"/>
    <property type="match status" value="2"/>
</dbReference>
<dbReference type="SUPFAM" id="SSF47473">
    <property type="entry name" value="EF-hand"/>
    <property type="match status" value="1"/>
</dbReference>
<dbReference type="PROSITE" id="PS00018">
    <property type="entry name" value="EF_HAND_1"/>
    <property type="match status" value="1"/>
</dbReference>
<dbReference type="PROSITE" id="PS50222">
    <property type="entry name" value="EF_HAND_2"/>
    <property type="match status" value="3"/>
</dbReference>
<name>CHP1_RAT</name>
<proteinExistence type="evidence at protein level"/>